<keyword id="KW-1003">Cell membrane</keyword>
<keyword id="KW-0472">Membrane</keyword>
<keyword id="KW-0653">Protein transport</keyword>
<keyword id="KW-1185">Reference proteome</keyword>
<keyword id="KW-0811">Translocation</keyword>
<keyword id="KW-0812">Transmembrane</keyword>
<keyword id="KW-1133">Transmembrane helix</keyword>
<keyword id="KW-0813">Transport</keyword>
<evidence type="ECO:0000255" key="1">
    <source>
        <dbReference type="HAMAP-Rule" id="MF_00422"/>
    </source>
</evidence>
<proteinExistence type="inferred from homology"/>
<reference key="1">
    <citation type="journal article" date="1993" name="Mol. Microbiol.">
        <title>Isolation and characterization of the secE homologue gene of Bacillus subtilis.</title>
        <authorList>
            <person name="Jeong S."/>
            <person name="Yoshikawa H."/>
            <person name="Takahashi H."/>
        </authorList>
    </citation>
    <scope>NUCLEOTIDE SEQUENCE [GENOMIC DNA]</scope>
</reference>
<reference key="2">
    <citation type="journal article" date="1997" name="Nature">
        <title>The complete genome sequence of the Gram-positive bacterium Bacillus subtilis.</title>
        <authorList>
            <person name="Kunst F."/>
            <person name="Ogasawara N."/>
            <person name="Moszer I."/>
            <person name="Albertini A.M."/>
            <person name="Alloni G."/>
            <person name="Azevedo V."/>
            <person name="Bertero M.G."/>
            <person name="Bessieres P."/>
            <person name="Bolotin A."/>
            <person name="Borchert S."/>
            <person name="Borriss R."/>
            <person name="Boursier L."/>
            <person name="Brans A."/>
            <person name="Braun M."/>
            <person name="Brignell S.C."/>
            <person name="Bron S."/>
            <person name="Brouillet S."/>
            <person name="Bruschi C.V."/>
            <person name="Caldwell B."/>
            <person name="Capuano V."/>
            <person name="Carter N.M."/>
            <person name="Choi S.-K."/>
            <person name="Codani J.-J."/>
            <person name="Connerton I.F."/>
            <person name="Cummings N.J."/>
            <person name="Daniel R.A."/>
            <person name="Denizot F."/>
            <person name="Devine K.M."/>
            <person name="Duesterhoeft A."/>
            <person name="Ehrlich S.D."/>
            <person name="Emmerson P.T."/>
            <person name="Entian K.-D."/>
            <person name="Errington J."/>
            <person name="Fabret C."/>
            <person name="Ferrari E."/>
            <person name="Foulger D."/>
            <person name="Fritz C."/>
            <person name="Fujita M."/>
            <person name="Fujita Y."/>
            <person name="Fuma S."/>
            <person name="Galizzi A."/>
            <person name="Galleron N."/>
            <person name="Ghim S.-Y."/>
            <person name="Glaser P."/>
            <person name="Goffeau A."/>
            <person name="Golightly E.J."/>
            <person name="Grandi G."/>
            <person name="Guiseppi G."/>
            <person name="Guy B.J."/>
            <person name="Haga K."/>
            <person name="Haiech J."/>
            <person name="Harwood C.R."/>
            <person name="Henaut A."/>
            <person name="Hilbert H."/>
            <person name="Holsappel S."/>
            <person name="Hosono S."/>
            <person name="Hullo M.-F."/>
            <person name="Itaya M."/>
            <person name="Jones L.-M."/>
            <person name="Joris B."/>
            <person name="Karamata D."/>
            <person name="Kasahara Y."/>
            <person name="Klaerr-Blanchard M."/>
            <person name="Klein C."/>
            <person name="Kobayashi Y."/>
            <person name="Koetter P."/>
            <person name="Koningstein G."/>
            <person name="Krogh S."/>
            <person name="Kumano M."/>
            <person name="Kurita K."/>
            <person name="Lapidus A."/>
            <person name="Lardinois S."/>
            <person name="Lauber J."/>
            <person name="Lazarevic V."/>
            <person name="Lee S.-M."/>
            <person name="Levine A."/>
            <person name="Liu H."/>
            <person name="Masuda S."/>
            <person name="Mauel C."/>
            <person name="Medigue C."/>
            <person name="Medina N."/>
            <person name="Mellado R.P."/>
            <person name="Mizuno M."/>
            <person name="Moestl D."/>
            <person name="Nakai S."/>
            <person name="Noback M."/>
            <person name="Noone D."/>
            <person name="O'Reilly M."/>
            <person name="Ogawa K."/>
            <person name="Ogiwara A."/>
            <person name="Oudega B."/>
            <person name="Park S.-H."/>
            <person name="Parro V."/>
            <person name="Pohl T.M."/>
            <person name="Portetelle D."/>
            <person name="Porwollik S."/>
            <person name="Prescott A.M."/>
            <person name="Presecan E."/>
            <person name="Pujic P."/>
            <person name="Purnelle B."/>
            <person name="Rapoport G."/>
            <person name="Rey M."/>
            <person name="Reynolds S."/>
            <person name="Rieger M."/>
            <person name="Rivolta C."/>
            <person name="Rocha E."/>
            <person name="Roche B."/>
            <person name="Rose M."/>
            <person name="Sadaie Y."/>
            <person name="Sato T."/>
            <person name="Scanlan E."/>
            <person name="Schleich S."/>
            <person name="Schroeter R."/>
            <person name="Scoffone F."/>
            <person name="Sekiguchi J."/>
            <person name="Sekowska A."/>
            <person name="Seror S.J."/>
            <person name="Serror P."/>
            <person name="Shin B.-S."/>
            <person name="Soldo B."/>
            <person name="Sorokin A."/>
            <person name="Tacconi E."/>
            <person name="Takagi T."/>
            <person name="Takahashi H."/>
            <person name="Takemaru K."/>
            <person name="Takeuchi M."/>
            <person name="Tamakoshi A."/>
            <person name="Tanaka T."/>
            <person name="Terpstra P."/>
            <person name="Tognoni A."/>
            <person name="Tosato V."/>
            <person name="Uchiyama S."/>
            <person name="Vandenbol M."/>
            <person name="Vannier F."/>
            <person name="Vassarotti A."/>
            <person name="Viari A."/>
            <person name="Wambutt R."/>
            <person name="Wedler E."/>
            <person name="Wedler H."/>
            <person name="Weitzenegger T."/>
            <person name="Winters P."/>
            <person name="Wipat A."/>
            <person name="Yamamoto H."/>
            <person name="Yamane K."/>
            <person name="Yasumoto K."/>
            <person name="Yata K."/>
            <person name="Yoshida K."/>
            <person name="Yoshikawa H.-F."/>
            <person name="Zumstein E."/>
            <person name="Yoshikawa H."/>
            <person name="Danchin A."/>
        </authorList>
    </citation>
    <scope>NUCLEOTIDE SEQUENCE [LARGE SCALE GENOMIC DNA]</scope>
    <source>
        <strain>168</strain>
    </source>
</reference>
<dbReference type="EMBL" id="D13303">
    <property type="protein sequence ID" value="BAA02559.1"/>
    <property type="molecule type" value="Genomic_DNA"/>
</dbReference>
<dbReference type="EMBL" id="AL009126">
    <property type="protein sequence ID" value="CAB11876.1"/>
    <property type="molecule type" value="Genomic_DNA"/>
</dbReference>
<dbReference type="PIR" id="S39858">
    <property type="entry name" value="S39858"/>
</dbReference>
<dbReference type="RefSeq" id="NP_387981.1">
    <property type="nucleotide sequence ID" value="NC_000964.3"/>
</dbReference>
<dbReference type="RefSeq" id="WP_004399676.1">
    <property type="nucleotide sequence ID" value="NZ_OZ025638.1"/>
</dbReference>
<dbReference type="SMR" id="Q06799"/>
<dbReference type="FunCoup" id="Q06799">
    <property type="interactions" value="99"/>
</dbReference>
<dbReference type="STRING" id="224308.BSU01000"/>
<dbReference type="PaxDb" id="224308-BSU01000"/>
<dbReference type="EnsemblBacteria" id="CAB11876">
    <property type="protein sequence ID" value="CAB11876"/>
    <property type="gene ID" value="BSU_01000"/>
</dbReference>
<dbReference type="GeneID" id="86875502"/>
<dbReference type="GeneID" id="936856"/>
<dbReference type="KEGG" id="bsu:BSU01000"/>
<dbReference type="PATRIC" id="fig|224308.179.peg.103"/>
<dbReference type="eggNOG" id="COG0690">
    <property type="taxonomic scope" value="Bacteria"/>
</dbReference>
<dbReference type="InParanoid" id="Q06799"/>
<dbReference type="PhylomeDB" id="Q06799"/>
<dbReference type="BioCyc" id="BSUB:BSU01000-MONOMER"/>
<dbReference type="Proteomes" id="UP000001570">
    <property type="component" value="Chromosome"/>
</dbReference>
<dbReference type="GO" id="GO:0005886">
    <property type="term" value="C:plasma membrane"/>
    <property type="evidence" value="ECO:0000318"/>
    <property type="project" value="GO_Central"/>
</dbReference>
<dbReference type="GO" id="GO:0008320">
    <property type="term" value="F:protein transmembrane transporter activity"/>
    <property type="evidence" value="ECO:0000318"/>
    <property type="project" value="GO_Central"/>
</dbReference>
<dbReference type="GO" id="GO:0065002">
    <property type="term" value="P:intracellular protein transmembrane transport"/>
    <property type="evidence" value="ECO:0007669"/>
    <property type="project" value="UniProtKB-UniRule"/>
</dbReference>
<dbReference type="GO" id="GO:0009306">
    <property type="term" value="P:protein secretion"/>
    <property type="evidence" value="ECO:0007669"/>
    <property type="project" value="UniProtKB-UniRule"/>
</dbReference>
<dbReference type="GO" id="GO:0006605">
    <property type="term" value="P:protein targeting"/>
    <property type="evidence" value="ECO:0007669"/>
    <property type="project" value="UniProtKB-UniRule"/>
</dbReference>
<dbReference type="GO" id="GO:0043952">
    <property type="term" value="P:protein transport by the Sec complex"/>
    <property type="evidence" value="ECO:0000318"/>
    <property type="project" value="GO_Central"/>
</dbReference>
<dbReference type="Gene3D" id="1.20.5.1030">
    <property type="entry name" value="Preprotein translocase secy subunit"/>
    <property type="match status" value="1"/>
</dbReference>
<dbReference type="HAMAP" id="MF_00422">
    <property type="entry name" value="SecE"/>
    <property type="match status" value="1"/>
</dbReference>
<dbReference type="InterPro" id="IPR005807">
    <property type="entry name" value="SecE_bac"/>
</dbReference>
<dbReference type="InterPro" id="IPR038379">
    <property type="entry name" value="SecE_sf"/>
</dbReference>
<dbReference type="InterPro" id="IPR001901">
    <property type="entry name" value="Translocase_SecE/Sec61-g"/>
</dbReference>
<dbReference type="NCBIfam" id="TIGR00964">
    <property type="entry name" value="secE_bact"/>
    <property type="match status" value="1"/>
</dbReference>
<dbReference type="PANTHER" id="PTHR33910">
    <property type="entry name" value="PROTEIN TRANSLOCASE SUBUNIT SECE"/>
    <property type="match status" value="1"/>
</dbReference>
<dbReference type="PANTHER" id="PTHR33910:SF1">
    <property type="entry name" value="PROTEIN TRANSLOCASE SUBUNIT SECE"/>
    <property type="match status" value="1"/>
</dbReference>
<dbReference type="Pfam" id="PF00584">
    <property type="entry name" value="SecE"/>
    <property type="match status" value="1"/>
</dbReference>
<dbReference type="PROSITE" id="PS01067">
    <property type="entry name" value="SECE_SEC61G"/>
    <property type="match status" value="1"/>
</dbReference>
<protein>
    <recommendedName>
        <fullName evidence="1">Protein translocase subunit SecE</fullName>
    </recommendedName>
</protein>
<gene>
    <name evidence="1" type="primary">secE</name>
    <name type="ordered locus">BSU01000</name>
</gene>
<accession>Q06799</accession>
<accession>P36689</accession>
<sequence>MRIMKFFKDVGKEMKKVSWPKGKELTRYTITVISTVIFFVIFFALLDTGISQLIRLIVE</sequence>
<organism>
    <name type="scientific">Bacillus subtilis (strain 168)</name>
    <dbReference type="NCBI Taxonomy" id="224308"/>
    <lineage>
        <taxon>Bacteria</taxon>
        <taxon>Bacillati</taxon>
        <taxon>Bacillota</taxon>
        <taxon>Bacilli</taxon>
        <taxon>Bacillales</taxon>
        <taxon>Bacillaceae</taxon>
        <taxon>Bacillus</taxon>
    </lineage>
</organism>
<comment type="function">
    <text evidence="1">Essential subunit of the Sec protein translocation channel SecYEG. Clamps together the 2 halves of SecY. May contact the channel plug during translocation.</text>
</comment>
<comment type="subunit">
    <text evidence="1">Component of the Sec protein translocase complex. Heterotrimer consisting of SecY, SecE and SecG subunits. The heterotrimers can form oligomers, although 1 heterotrimer is thought to be able to translocate proteins. Interacts with the ribosome. Interacts with SecDF, and other proteins may be involved. Interacts with SecA.</text>
</comment>
<comment type="subcellular location">
    <subcellularLocation>
        <location evidence="1">Cell membrane</location>
        <topology evidence="1">Single-pass membrane protein</topology>
    </subcellularLocation>
</comment>
<comment type="similarity">
    <text evidence="1">Belongs to the SecE/SEC61-gamma family.</text>
</comment>
<name>SECE_BACSU</name>
<feature type="chain" id="PRO_0000104158" description="Protein translocase subunit SecE">
    <location>
        <begin position="1"/>
        <end position="59"/>
    </location>
</feature>
<feature type="transmembrane region" description="Helical" evidence="1">
    <location>
        <begin position="30"/>
        <end position="50"/>
    </location>
</feature>